<evidence type="ECO:0000255" key="1">
    <source>
        <dbReference type="HAMAP-Rule" id="MF_00048"/>
    </source>
</evidence>
<protein>
    <recommendedName>
        <fullName evidence="1">UPF0102 protein MS1289</fullName>
    </recommendedName>
</protein>
<comment type="similarity">
    <text evidence="1">Belongs to the UPF0102 family.</text>
</comment>
<gene>
    <name type="ordered locus">MS1289</name>
</gene>
<sequence>MFSLKRQQGASFEQQARLFLESQGLQFIAANQNFKCGELDLVMLDGETIVFVEVRQRKNDHFGSAVESVDWQKQQKWINAASLWLATQNHSLEDTDCRFDLVAFGATASNVQWLKNFIE</sequence>
<dbReference type="EMBL" id="AE016827">
    <property type="protein sequence ID" value="AAU37896.1"/>
    <property type="molecule type" value="Genomic_DNA"/>
</dbReference>
<dbReference type="RefSeq" id="WP_011200463.1">
    <property type="nucleotide sequence ID" value="NC_006300.1"/>
</dbReference>
<dbReference type="SMR" id="Q65T14"/>
<dbReference type="STRING" id="221988.MS1289"/>
<dbReference type="KEGG" id="msu:MS1289"/>
<dbReference type="eggNOG" id="COG0792">
    <property type="taxonomic scope" value="Bacteria"/>
</dbReference>
<dbReference type="HOGENOM" id="CLU_115353_1_0_6"/>
<dbReference type="OrthoDB" id="9794876at2"/>
<dbReference type="Proteomes" id="UP000000607">
    <property type="component" value="Chromosome"/>
</dbReference>
<dbReference type="GO" id="GO:0003676">
    <property type="term" value="F:nucleic acid binding"/>
    <property type="evidence" value="ECO:0007669"/>
    <property type="project" value="InterPro"/>
</dbReference>
<dbReference type="Gene3D" id="3.40.1350.10">
    <property type="match status" value="1"/>
</dbReference>
<dbReference type="HAMAP" id="MF_00048">
    <property type="entry name" value="UPF0102"/>
    <property type="match status" value="1"/>
</dbReference>
<dbReference type="InterPro" id="IPR011335">
    <property type="entry name" value="Restrct_endonuc-II-like"/>
</dbReference>
<dbReference type="InterPro" id="IPR011856">
    <property type="entry name" value="tRNA_endonuc-like_dom_sf"/>
</dbReference>
<dbReference type="InterPro" id="IPR003509">
    <property type="entry name" value="UPF0102_YraN-like"/>
</dbReference>
<dbReference type="NCBIfam" id="NF009150">
    <property type="entry name" value="PRK12497.1-3"/>
    <property type="match status" value="1"/>
</dbReference>
<dbReference type="NCBIfam" id="TIGR00252">
    <property type="entry name" value="YraN family protein"/>
    <property type="match status" value="1"/>
</dbReference>
<dbReference type="PANTHER" id="PTHR34039">
    <property type="entry name" value="UPF0102 PROTEIN YRAN"/>
    <property type="match status" value="1"/>
</dbReference>
<dbReference type="PANTHER" id="PTHR34039:SF1">
    <property type="entry name" value="UPF0102 PROTEIN YRAN"/>
    <property type="match status" value="1"/>
</dbReference>
<dbReference type="Pfam" id="PF02021">
    <property type="entry name" value="UPF0102"/>
    <property type="match status" value="1"/>
</dbReference>
<dbReference type="SUPFAM" id="SSF52980">
    <property type="entry name" value="Restriction endonuclease-like"/>
    <property type="match status" value="1"/>
</dbReference>
<feature type="chain" id="PRO_0000167361" description="UPF0102 protein MS1289">
    <location>
        <begin position="1"/>
        <end position="119"/>
    </location>
</feature>
<reference key="1">
    <citation type="journal article" date="2004" name="Nat. Biotechnol.">
        <title>The genome sequence of the capnophilic rumen bacterium Mannheimia succiniciproducens.</title>
        <authorList>
            <person name="Hong S.H."/>
            <person name="Kim J.S."/>
            <person name="Lee S.Y."/>
            <person name="In Y.H."/>
            <person name="Choi S.S."/>
            <person name="Rih J.-K."/>
            <person name="Kim C.H."/>
            <person name="Jeong H."/>
            <person name="Hur C.G."/>
            <person name="Kim J.J."/>
        </authorList>
    </citation>
    <scope>NUCLEOTIDE SEQUENCE [LARGE SCALE GENOMIC DNA]</scope>
    <source>
        <strain>KCTC 0769BP / MBEL55E</strain>
    </source>
</reference>
<proteinExistence type="inferred from homology"/>
<accession>Q65T14</accession>
<name>Y1289_MANSM</name>
<organism>
    <name type="scientific">Mannheimia succiniciproducens (strain KCTC 0769BP / MBEL55E)</name>
    <dbReference type="NCBI Taxonomy" id="221988"/>
    <lineage>
        <taxon>Bacteria</taxon>
        <taxon>Pseudomonadati</taxon>
        <taxon>Pseudomonadota</taxon>
        <taxon>Gammaproteobacteria</taxon>
        <taxon>Pasteurellales</taxon>
        <taxon>Pasteurellaceae</taxon>
        <taxon>Basfia</taxon>
    </lineage>
</organism>